<sequence>MIEKIWFDNHFLGKLLWPLLWPLSYLFKWIATKRKSDYQSGKKQSYRSSVPVVVVGNITAGGNGKTPVVVWLVEQLQSKGYKVGVASRGYGGKAPHYPYLLTETTTPDISGDEPVLIKQRTKAEVAVAPVRSEAVKMLEQQGVDFIITDDGLQHYALQRDIEFIVIDGKRRFGNQHYIPLGPLREGVERLSSVDFLICNGGESQENEVSMRLQPSEAINLVTGERRSVSSLSNLVAFAGIGHPPRFFETLNQLKANVVHTQGFEDHKAFEPTEIEQLMQYGEQLIMTEKDAVKCQSFAQSSWWYLPVDATFPKEKAQQILNKIIEVKE</sequence>
<name>LPXK_ALIF1</name>
<keyword id="KW-0067">ATP-binding</keyword>
<keyword id="KW-0418">Kinase</keyword>
<keyword id="KW-0441">Lipid A biosynthesis</keyword>
<keyword id="KW-0444">Lipid biosynthesis</keyword>
<keyword id="KW-0443">Lipid metabolism</keyword>
<keyword id="KW-0547">Nucleotide-binding</keyword>
<keyword id="KW-1185">Reference proteome</keyword>
<keyword id="KW-0808">Transferase</keyword>
<protein>
    <recommendedName>
        <fullName evidence="1">Tetraacyldisaccharide 4'-kinase</fullName>
        <ecNumber evidence="1">2.7.1.130</ecNumber>
    </recommendedName>
    <alternativeName>
        <fullName evidence="1">Lipid A 4'-kinase</fullName>
    </alternativeName>
</protein>
<gene>
    <name evidence="1" type="primary">lpxK</name>
    <name type="ordered locus">VF_A0425</name>
</gene>
<organism>
    <name type="scientific">Aliivibrio fischeri (strain ATCC 700601 / ES114)</name>
    <name type="common">Vibrio fischeri</name>
    <dbReference type="NCBI Taxonomy" id="312309"/>
    <lineage>
        <taxon>Bacteria</taxon>
        <taxon>Pseudomonadati</taxon>
        <taxon>Pseudomonadota</taxon>
        <taxon>Gammaproteobacteria</taxon>
        <taxon>Vibrionales</taxon>
        <taxon>Vibrionaceae</taxon>
        <taxon>Aliivibrio</taxon>
    </lineage>
</organism>
<accession>Q5E0F1</accession>
<evidence type="ECO:0000255" key="1">
    <source>
        <dbReference type="HAMAP-Rule" id="MF_00409"/>
    </source>
</evidence>
<reference key="1">
    <citation type="journal article" date="2005" name="Proc. Natl. Acad. Sci. U.S.A.">
        <title>Complete genome sequence of Vibrio fischeri: a symbiotic bacterium with pathogenic congeners.</title>
        <authorList>
            <person name="Ruby E.G."/>
            <person name="Urbanowski M."/>
            <person name="Campbell J."/>
            <person name="Dunn A."/>
            <person name="Faini M."/>
            <person name="Gunsalus R."/>
            <person name="Lostroh P."/>
            <person name="Lupp C."/>
            <person name="McCann J."/>
            <person name="Millikan D."/>
            <person name="Schaefer A."/>
            <person name="Stabb E."/>
            <person name="Stevens A."/>
            <person name="Visick K."/>
            <person name="Whistler C."/>
            <person name="Greenberg E.P."/>
        </authorList>
    </citation>
    <scope>NUCLEOTIDE SEQUENCE [LARGE SCALE GENOMIC DNA]</scope>
    <source>
        <strain>ATCC 700601 / ES114</strain>
    </source>
</reference>
<comment type="function">
    <text evidence="1">Transfers the gamma-phosphate of ATP to the 4'-position of a tetraacyldisaccharide 1-phosphate intermediate (termed DS-1-P) to form tetraacyldisaccharide 1,4'-bis-phosphate (lipid IVA).</text>
</comment>
<comment type="catalytic activity">
    <reaction evidence="1">
        <text>a lipid A disaccharide + ATP = a lipid IVA + ADP + H(+)</text>
        <dbReference type="Rhea" id="RHEA:67840"/>
        <dbReference type="ChEBI" id="CHEBI:15378"/>
        <dbReference type="ChEBI" id="CHEBI:30616"/>
        <dbReference type="ChEBI" id="CHEBI:176343"/>
        <dbReference type="ChEBI" id="CHEBI:176425"/>
        <dbReference type="ChEBI" id="CHEBI:456216"/>
        <dbReference type="EC" id="2.7.1.130"/>
    </reaction>
</comment>
<comment type="pathway">
    <text evidence="1">Glycolipid biosynthesis; lipid IV(A) biosynthesis; lipid IV(A) from (3R)-3-hydroxytetradecanoyl-[acyl-carrier-protein] and UDP-N-acetyl-alpha-D-glucosamine: step 6/6.</text>
</comment>
<comment type="similarity">
    <text evidence="1">Belongs to the LpxK family.</text>
</comment>
<dbReference type="EC" id="2.7.1.130" evidence="1"/>
<dbReference type="EMBL" id="CP000021">
    <property type="protein sequence ID" value="AAW87495.1"/>
    <property type="molecule type" value="Genomic_DNA"/>
</dbReference>
<dbReference type="RefSeq" id="WP_011263298.1">
    <property type="nucleotide sequence ID" value="NC_006841.2"/>
</dbReference>
<dbReference type="RefSeq" id="YP_206383.1">
    <property type="nucleotide sequence ID" value="NC_006841.2"/>
</dbReference>
<dbReference type="SMR" id="Q5E0F1"/>
<dbReference type="STRING" id="312309.VF_A0425"/>
<dbReference type="EnsemblBacteria" id="AAW87495">
    <property type="protein sequence ID" value="AAW87495"/>
    <property type="gene ID" value="VF_A0425"/>
</dbReference>
<dbReference type="GeneID" id="54165751"/>
<dbReference type="KEGG" id="vfi:VF_A0425"/>
<dbReference type="PATRIC" id="fig|312309.11.peg.3030"/>
<dbReference type="eggNOG" id="COG1663">
    <property type="taxonomic scope" value="Bacteria"/>
</dbReference>
<dbReference type="HOGENOM" id="CLU_038816_2_0_6"/>
<dbReference type="OrthoDB" id="9766423at2"/>
<dbReference type="UniPathway" id="UPA00359">
    <property type="reaction ID" value="UER00482"/>
</dbReference>
<dbReference type="Proteomes" id="UP000000537">
    <property type="component" value="Chromosome II"/>
</dbReference>
<dbReference type="GO" id="GO:0005886">
    <property type="term" value="C:plasma membrane"/>
    <property type="evidence" value="ECO:0007669"/>
    <property type="project" value="TreeGrafter"/>
</dbReference>
<dbReference type="GO" id="GO:0005524">
    <property type="term" value="F:ATP binding"/>
    <property type="evidence" value="ECO:0007669"/>
    <property type="project" value="UniProtKB-UniRule"/>
</dbReference>
<dbReference type="GO" id="GO:0009029">
    <property type="term" value="F:tetraacyldisaccharide 4'-kinase activity"/>
    <property type="evidence" value="ECO:0007669"/>
    <property type="project" value="UniProtKB-UniRule"/>
</dbReference>
<dbReference type="GO" id="GO:0009245">
    <property type="term" value="P:lipid A biosynthetic process"/>
    <property type="evidence" value="ECO:0007669"/>
    <property type="project" value="UniProtKB-UniRule"/>
</dbReference>
<dbReference type="GO" id="GO:0009244">
    <property type="term" value="P:lipopolysaccharide core region biosynthetic process"/>
    <property type="evidence" value="ECO:0007669"/>
    <property type="project" value="TreeGrafter"/>
</dbReference>
<dbReference type="HAMAP" id="MF_00409">
    <property type="entry name" value="LpxK"/>
    <property type="match status" value="1"/>
</dbReference>
<dbReference type="InterPro" id="IPR003758">
    <property type="entry name" value="LpxK"/>
</dbReference>
<dbReference type="InterPro" id="IPR027417">
    <property type="entry name" value="P-loop_NTPase"/>
</dbReference>
<dbReference type="NCBIfam" id="TIGR00682">
    <property type="entry name" value="lpxK"/>
    <property type="match status" value="1"/>
</dbReference>
<dbReference type="PANTHER" id="PTHR42724">
    <property type="entry name" value="TETRAACYLDISACCHARIDE 4'-KINASE"/>
    <property type="match status" value="1"/>
</dbReference>
<dbReference type="PANTHER" id="PTHR42724:SF1">
    <property type="entry name" value="TETRAACYLDISACCHARIDE 4'-KINASE, MITOCHONDRIAL-RELATED"/>
    <property type="match status" value="1"/>
</dbReference>
<dbReference type="Pfam" id="PF02606">
    <property type="entry name" value="LpxK"/>
    <property type="match status" value="1"/>
</dbReference>
<dbReference type="SUPFAM" id="SSF52540">
    <property type="entry name" value="P-loop containing nucleoside triphosphate hydrolases"/>
    <property type="match status" value="1"/>
</dbReference>
<feature type="chain" id="PRO_0000229986" description="Tetraacyldisaccharide 4'-kinase">
    <location>
        <begin position="1"/>
        <end position="328"/>
    </location>
</feature>
<feature type="binding site" evidence="1">
    <location>
        <begin position="59"/>
        <end position="66"/>
    </location>
    <ligand>
        <name>ATP</name>
        <dbReference type="ChEBI" id="CHEBI:30616"/>
    </ligand>
</feature>
<proteinExistence type="inferred from homology"/>